<sequence length="199" mass="22275">MTDLYAEALATFATLYAEAQNSAEIEASAMTVATANLDGRPSARTVLLKAFDARGFVFYTHLDSAKGRDLQTHPQAALLFLWRSLREAGIQVRIEGGVQLVSADESDAYFASRPRMSQIGAWASLQSQTLGSREEFEAAIAKVEATFDGRDVPRPDGWGGFRVVPQAFEFWYGAKFRLHERWRYEADAASHWSKRMLYP</sequence>
<comment type="function">
    <text evidence="1">Catalyzes the oxidation of either pyridoxine 5'-phosphate (PNP) or pyridoxamine 5'-phosphate (PMP) into pyridoxal 5'-phosphate (PLP).</text>
</comment>
<comment type="catalytic activity">
    <reaction evidence="1">
        <text>pyridoxamine 5'-phosphate + O2 + H2O = pyridoxal 5'-phosphate + H2O2 + NH4(+)</text>
        <dbReference type="Rhea" id="RHEA:15817"/>
        <dbReference type="ChEBI" id="CHEBI:15377"/>
        <dbReference type="ChEBI" id="CHEBI:15379"/>
        <dbReference type="ChEBI" id="CHEBI:16240"/>
        <dbReference type="ChEBI" id="CHEBI:28938"/>
        <dbReference type="ChEBI" id="CHEBI:58451"/>
        <dbReference type="ChEBI" id="CHEBI:597326"/>
        <dbReference type="EC" id="1.4.3.5"/>
    </reaction>
</comment>
<comment type="catalytic activity">
    <reaction evidence="1">
        <text>pyridoxine 5'-phosphate + O2 = pyridoxal 5'-phosphate + H2O2</text>
        <dbReference type="Rhea" id="RHEA:15149"/>
        <dbReference type="ChEBI" id="CHEBI:15379"/>
        <dbReference type="ChEBI" id="CHEBI:16240"/>
        <dbReference type="ChEBI" id="CHEBI:58589"/>
        <dbReference type="ChEBI" id="CHEBI:597326"/>
        <dbReference type="EC" id="1.4.3.5"/>
    </reaction>
</comment>
<comment type="cofactor">
    <cofactor evidence="1">
        <name>FMN</name>
        <dbReference type="ChEBI" id="CHEBI:58210"/>
    </cofactor>
    <text evidence="1">Binds 1 FMN per subunit.</text>
</comment>
<comment type="pathway">
    <text evidence="1">Cofactor metabolism; pyridoxal 5'-phosphate salvage; pyridoxal 5'-phosphate from pyridoxamine 5'-phosphate: step 1/1.</text>
</comment>
<comment type="pathway">
    <text evidence="1">Cofactor metabolism; pyridoxal 5'-phosphate salvage; pyridoxal 5'-phosphate from pyridoxine 5'-phosphate: step 1/1.</text>
</comment>
<comment type="subunit">
    <text evidence="1">Homodimer.</text>
</comment>
<comment type="similarity">
    <text evidence="1">Belongs to the pyridoxamine 5'-phosphate oxidase family.</text>
</comment>
<feature type="chain" id="PRO_0000167774" description="Pyridoxine/pyridoxamine 5'-phosphate oxidase">
    <location>
        <begin position="1"/>
        <end position="199"/>
    </location>
</feature>
<feature type="binding site" evidence="1">
    <location>
        <begin position="44"/>
        <end position="49"/>
    </location>
    <ligand>
        <name>FMN</name>
        <dbReference type="ChEBI" id="CHEBI:58210"/>
    </ligand>
</feature>
<feature type="binding site" evidence="1">
    <location>
        <position position="49"/>
    </location>
    <ligand>
        <name>substrate</name>
    </ligand>
</feature>
<feature type="binding site" evidence="1">
    <location>
        <begin position="59"/>
        <end position="60"/>
    </location>
    <ligand>
        <name>FMN</name>
        <dbReference type="ChEBI" id="CHEBI:58210"/>
    </ligand>
</feature>
<feature type="binding site" evidence="1">
    <location>
        <position position="66"/>
    </location>
    <ligand>
        <name>FMN</name>
        <dbReference type="ChEBI" id="CHEBI:58210"/>
    </ligand>
</feature>
<feature type="binding site" evidence="1">
    <location>
        <position position="91"/>
    </location>
    <ligand>
        <name>FMN</name>
        <dbReference type="ChEBI" id="CHEBI:58210"/>
    </ligand>
</feature>
<feature type="binding site" evidence="1">
    <location>
        <position position="109"/>
    </location>
    <ligand>
        <name>substrate</name>
    </ligand>
</feature>
<feature type="binding site" evidence="1">
    <location>
        <position position="113"/>
    </location>
    <ligand>
        <name>substrate</name>
    </ligand>
</feature>
<feature type="binding site" evidence="1">
    <location>
        <position position="117"/>
    </location>
    <ligand>
        <name>substrate</name>
    </ligand>
</feature>
<feature type="binding site" evidence="1">
    <location>
        <begin position="126"/>
        <end position="127"/>
    </location>
    <ligand>
        <name>FMN</name>
        <dbReference type="ChEBI" id="CHEBI:58210"/>
    </ligand>
</feature>
<feature type="binding site" evidence="1">
    <location>
        <position position="171"/>
    </location>
    <ligand>
        <name>FMN</name>
        <dbReference type="ChEBI" id="CHEBI:58210"/>
    </ligand>
</feature>
<feature type="binding site" evidence="1">
    <location>
        <begin position="177"/>
        <end position="179"/>
    </location>
    <ligand>
        <name>substrate</name>
    </ligand>
</feature>
<feature type="binding site" evidence="1">
    <location>
        <position position="181"/>
    </location>
    <ligand>
        <name>FMN</name>
        <dbReference type="ChEBI" id="CHEBI:58210"/>
    </ligand>
</feature>
<accession>Q4UX84</accession>
<keyword id="KW-0285">Flavoprotein</keyword>
<keyword id="KW-0288">FMN</keyword>
<keyword id="KW-0560">Oxidoreductase</keyword>
<keyword id="KW-0664">Pyridoxine biosynthesis</keyword>
<gene>
    <name evidence="1" type="primary">pdxH</name>
    <name type="ordered locus">XC_1270</name>
</gene>
<reference key="1">
    <citation type="journal article" date="2005" name="Genome Res.">
        <title>Comparative and functional genomic analyses of the pathogenicity of phytopathogen Xanthomonas campestris pv. campestris.</title>
        <authorList>
            <person name="Qian W."/>
            <person name="Jia Y."/>
            <person name="Ren S.-X."/>
            <person name="He Y.-Q."/>
            <person name="Feng J.-X."/>
            <person name="Lu L.-F."/>
            <person name="Sun Q."/>
            <person name="Ying G."/>
            <person name="Tang D.-J."/>
            <person name="Tang H."/>
            <person name="Wu W."/>
            <person name="Hao P."/>
            <person name="Wang L."/>
            <person name="Jiang B.-L."/>
            <person name="Zeng S."/>
            <person name="Gu W.-Y."/>
            <person name="Lu G."/>
            <person name="Rong L."/>
            <person name="Tian Y."/>
            <person name="Yao Z."/>
            <person name="Fu G."/>
            <person name="Chen B."/>
            <person name="Fang R."/>
            <person name="Qiang B."/>
            <person name="Chen Z."/>
            <person name="Zhao G.-P."/>
            <person name="Tang J.-L."/>
            <person name="He C."/>
        </authorList>
    </citation>
    <scope>NUCLEOTIDE SEQUENCE [LARGE SCALE GENOMIC DNA]</scope>
    <source>
        <strain>8004</strain>
    </source>
</reference>
<evidence type="ECO:0000255" key="1">
    <source>
        <dbReference type="HAMAP-Rule" id="MF_01629"/>
    </source>
</evidence>
<organism>
    <name type="scientific">Xanthomonas campestris pv. campestris (strain 8004)</name>
    <dbReference type="NCBI Taxonomy" id="314565"/>
    <lineage>
        <taxon>Bacteria</taxon>
        <taxon>Pseudomonadati</taxon>
        <taxon>Pseudomonadota</taxon>
        <taxon>Gammaproteobacteria</taxon>
        <taxon>Lysobacterales</taxon>
        <taxon>Lysobacteraceae</taxon>
        <taxon>Xanthomonas</taxon>
    </lineage>
</organism>
<name>PDXH_XANC8</name>
<proteinExistence type="inferred from homology"/>
<dbReference type="EC" id="1.4.3.5" evidence="1"/>
<dbReference type="EMBL" id="CP000050">
    <property type="protein sequence ID" value="AAY48339.1"/>
    <property type="molecule type" value="Genomic_DNA"/>
</dbReference>
<dbReference type="RefSeq" id="WP_011037965.1">
    <property type="nucleotide sequence ID" value="NZ_CP155948.1"/>
</dbReference>
<dbReference type="SMR" id="Q4UX84"/>
<dbReference type="KEGG" id="xcb:XC_1270"/>
<dbReference type="HOGENOM" id="CLU_032263_2_3_6"/>
<dbReference type="UniPathway" id="UPA01068">
    <property type="reaction ID" value="UER00304"/>
</dbReference>
<dbReference type="UniPathway" id="UPA01068">
    <property type="reaction ID" value="UER00305"/>
</dbReference>
<dbReference type="Proteomes" id="UP000000420">
    <property type="component" value="Chromosome"/>
</dbReference>
<dbReference type="GO" id="GO:0010181">
    <property type="term" value="F:FMN binding"/>
    <property type="evidence" value="ECO:0007669"/>
    <property type="project" value="UniProtKB-UniRule"/>
</dbReference>
<dbReference type="GO" id="GO:0004733">
    <property type="term" value="F:pyridoxamine phosphate oxidase activity"/>
    <property type="evidence" value="ECO:0007669"/>
    <property type="project" value="UniProtKB-UniRule"/>
</dbReference>
<dbReference type="GO" id="GO:0008615">
    <property type="term" value="P:pyridoxine biosynthetic process"/>
    <property type="evidence" value="ECO:0007669"/>
    <property type="project" value="UniProtKB-KW"/>
</dbReference>
<dbReference type="FunFam" id="2.30.110.10:FF:000012">
    <property type="entry name" value="Predicted protein"/>
    <property type="match status" value="1"/>
</dbReference>
<dbReference type="Gene3D" id="2.30.110.10">
    <property type="entry name" value="Electron Transport, Fmn-binding Protein, Chain A"/>
    <property type="match status" value="1"/>
</dbReference>
<dbReference type="HAMAP" id="MF_01629">
    <property type="entry name" value="PdxH"/>
    <property type="match status" value="1"/>
</dbReference>
<dbReference type="InterPro" id="IPR000659">
    <property type="entry name" value="Pyridox_Oxase"/>
</dbReference>
<dbReference type="InterPro" id="IPR019740">
    <property type="entry name" value="Pyridox_Oxase_CS"/>
</dbReference>
<dbReference type="InterPro" id="IPR011576">
    <property type="entry name" value="Pyridox_Oxase_N"/>
</dbReference>
<dbReference type="InterPro" id="IPR019576">
    <property type="entry name" value="Pyridoxamine_oxidase_dimer_C"/>
</dbReference>
<dbReference type="InterPro" id="IPR012349">
    <property type="entry name" value="Split_barrel_FMN-bd"/>
</dbReference>
<dbReference type="NCBIfam" id="TIGR00558">
    <property type="entry name" value="pdxH"/>
    <property type="match status" value="1"/>
</dbReference>
<dbReference type="NCBIfam" id="NF004231">
    <property type="entry name" value="PRK05679.1"/>
    <property type="match status" value="1"/>
</dbReference>
<dbReference type="PANTHER" id="PTHR10851:SF0">
    <property type="entry name" value="PYRIDOXINE-5'-PHOSPHATE OXIDASE"/>
    <property type="match status" value="1"/>
</dbReference>
<dbReference type="PANTHER" id="PTHR10851">
    <property type="entry name" value="PYRIDOXINE-5-PHOSPHATE OXIDASE"/>
    <property type="match status" value="1"/>
</dbReference>
<dbReference type="Pfam" id="PF10590">
    <property type="entry name" value="PNP_phzG_C"/>
    <property type="match status" value="1"/>
</dbReference>
<dbReference type="Pfam" id="PF01243">
    <property type="entry name" value="PNPOx_N"/>
    <property type="match status" value="1"/>
</dbReference>
<dbReference type="PIRSF" id="PIRSF000190">
    <property type="entry name" value="Pyd_amn-ph_oxd"/>
    <property type="match status" value="1"/>
</dbReference>
<dbReference type="SUPFAM" id="SSF50475">
    <property type="entry name" value="FMN-binding split barrel"/>
    <property type="match status" value="1"/>
</dbReference>
<dbReference type="PROSITE" id="PS01064">
    <property type="entry name" value="PYRIDOX_OXIDASE"/>
    <property type="match status" value="1"/>
</dbReference>
<protein>
    <recommendedName>
        <fullName evidence="1">Pyridoxine/pyridoxamine 5'-phosphate oxidase</fullName>
        <ecNumber evidence="1">1.4.3.5</ecNumber>
    </recommendedName>
    <alternativeName>
        <fullName evidence="1">PNP/PMP oxidase</fullName>
        <shortName evidence="1">PNPOx</shortName>
    </alternativeName>
    <alternativeName>
        <fullName evidence="1">Pyridoxal 5'-phosphate synthase</fullName>
    </alternativeName>
</protein>